<evidence type="ECO:0000255" key="1">
    <source>
        <dbReference type="HAMAP-Rule" id="MF_01217"/>
    </source>
</evidence>
<evidence type="ECO:0000255" key="2">
    <source>
        <dbReference type="PROSITE-ProRule" id="PRU00258"/>
    </source>
</evidence>
<keyword id="KW-0963">Cytoplasm</keyword>
<keyword id="KW-0275">Fatty acid biosynthesis</keyword>
<keyword id="KW-0276">Fatty acid metabolism</keyword>
<keyword id="KW-0444">Lipid biosynthesis</keyword>
<keyword id="KW-0443">Lipid metabolism</keyword>
<keyword id="KW-0596">Phosphopantetheine</keyword>
<keyword id="KW-0597">Phosphoprotein</keyword>
<keyword id="KW-1185">Reference proteome</keyword>
<organism>
    <name type="scientific">Bdellovibrio bacteriovorus (strain ATCC 15356 / DSM 50701 / NCIMB 9529 / HD100)</name>
    <dbReference type="NCBI Taxonomy" id="264462"/>
    <lineage>
        <taxon>Bacteria</taxon>
        <taxon>Pseudomonadati</taxon>
        <taxon>Bdellovibrionota</taxon>
        <taxon>Bdellovibrionia</taxon>
        <taxon>Bdellovibrionales</taxon>
        <taxon>Pseudobdellovibrionaceae</taxon>
        <taxon>Bdellovibrio</taxon>
    </lineage>
</organism>
<name>ACP_BDEBA</name>
<protein>
    <recommendedName>
        <fullName evidence="1">Acyl carrier protein</fullName>
        <shortName evidence="1">ACP</shortName>
    </recommendedName>
</protein>
<proteinExistence type="inferred from homology"/>
<sequence length="78" mass="8631">MAIHPKVKDIIVEQLGVDPDKVKAEASFIDDLGADSLDIVELVMAMEEEFDLEIPDEDAEKLKTVQDVASYLEKKGKA</sequence>
<comment type="function">
    <text evidence="1">Carrier of the growing fatty acid chain in fatty acid biosynthesis.</text>
</comment>
<comment type="pathway">
    <text evidence="1">Lipid metabolism; fatty acid biosynthesis.</text>
</comment>
<comment type="subcellular location">
    <subcellularLocation>
        <location evidence="1">Cytoplasm</location>
    </subcellularLocation>
</comment>
<comment type="PTM">
    <text evidence="1">4'-phosphopantetheine is transferred from CoA to a specific serine of apo-ACP by AcpS. This modification is essential for activity because fatty acids are bound in thioester linkage to the sulfhydryl of the prosthetic group.</text>
</comment>
<comment type="similarity">
    <text evidence="1">Belongs to the acyl carrier protein (ACP) family.</text>
</comment>
<feature type="chain" id="PRO_0000180108" description="Acyl carrier protein">
    <location>
        <begin position="1"/>
        <end position="78"/>
    </location>
</feature>
<feature type="domain" description="Carrier" evidence="2">
    <location>
        <begin position="1"/>
        <end position="76"/>
    </location>
</feature>
<feature type="modified residue" description="O-(pantetheine 4'-phosphoryl)serine" evidence="2">
    <location>
        <position position="36"/>
    </location>
</feature>
<dbReference type="EMBL" id="BX842651">
    <property type="protein sequence ID" value="CAE79859.1"/>
    <property type="molecule type" value="Genomic_DNA"/>
</dbReference>
<dbReference type="RefSeq" id="WP_011164461.1">
    <property type="nucleotide sequence ID" value="NC_005363.1"/>
</dbReference>
<dbReference type="SMR" id="Q6MLJ8"/>
<dbReference type="STRING" id="264462.Bd2011"/>
<dbReference type="GeneID" id="93012960"/>
<dbReference type="KEGG" id="bba:Bd2011"/>
<dbReference type="eggNOG" id="COG0236">
    <property type="taxonomic scope" value="Bacteria"/>
</dbReference>
<dbReference type="HOGENOM" id="CLU_108696_5_1_7"/>
<dbReference type="UniPathway" id="UPA00094"/>
<dbReference type="Proteomes" id="UP000008080">
    <property type="component" value="Chromosome"/>
</dbReference>
<dbReference type="GO" id="GO:0005829">
    <property type="term" value="C:cytosol"/>
    <property type="evidence" value="ECO:0007669"/>
    <property type="project" value="TreeGrafter"/>
</dbReference>
<dbReference type="GO" id="GO:0016020">
    <property type="term" value="C:membrane"/>
    <property type="evidence" value="ECO:0007669"/>
    <property type="project" value="GOC"/>
</dbReference>
<dbReference type="GO" id="GO:0000035">
    <property type="term" value="F:acyl binding"/>
    <property type="evidence" value="ECO:0007669"/>
    <property type="project" value="TreeGrafter"/>
</dbReference>
<dbReference type="GO" id="GO:0000036">
    <property type="term" value="F:acyl carrier activity"/>
    <property type="evidence" value="ECO:0007669"/>
    <property type="project" value="UniProtKB-UniRule"/>
</dbReference>
<dbReference type="GO" id="GO:0009245">
    <property type="term" value="P:lipid A biosynthetic process"/>
    <property type="evidence" value="ECO:0007669"/>
    <property type="project" value="TreeGrafter"/>
</dbReference>
<dbReference type="FunFam" id="1.10.1200.10:FF:000001">
    <property type="entry name" value="Acyl carrier protein"/>
    <property type="match status" value="1"/>
</dbReference>
<dbReference type="Gene3D" id="1.10.1200.10">
    <property type="entry name" value="ACP-like"/>
    <property type="match status" value="1"/>
</dbReference>
<dbReference type="HAMAP" id="MF_01217">
    <property type="entry name" value="Acyl_carrier"/>
    <property type="match status" value="1"/>
</dbReference>
<dbReference type="InterPro" id="IPR003231">
    <property type="entry name" value="ACP"/>
</dbReference>
<dbReference type="InterPro" id="IPR036736">
    <property type="entry name" value="ACP-like_sf"/>
</dbReference>
<dbReference type="InterPro" id="IPR009081">
    <property type="entry name" value="PP-bd_ACP"/>
</dbReference>
<dbReference type="InterPro" id="IPR006162">
    <property type="entry name" value="Ppantetheine_attach_site"/>
</dbReference>
<dbReference type="NCBIfam" id="TIGR00517">
    <property type="entry name" value="acyl_carrier"/>
    <property type="match status" value="1"/>
</dbReference>
<dbReference type="NCBIfam" id="NF002148">
    <property type="entry name" value="PRK00982.1-2"/>
    <property type="match status" value="1"/>
</dbReference>
<dbReference type="NCBIfam" id="NF002149">
    <property type="entry name" value="PRK00982.1-3"/>
    <property type="match status" value="1"/>
</dbReference>
<dbReference type="NCBIfam" id="NF002150">
    <property type="entry name" value="PRK00982.1-4"/>
    <property type="match status" value="1"/>
</dbReference>
<dbReference type="NCBIfam" id="NF002151">
    <property type="entry name" value="PRK00982.1-5"/>
    <property type="match status" value="1"/>
</dbReference>
<dbReference type="PANTHER" id="PTHR20863">
    <property type="entry name" value="ACYL CARRIER PROTEIN"/>
    <property type="match status" value="1"/>
</dbReference>
<dbReference type="PANTHER" id="PTHR20863:SF76">
    <property type="entry name" value="CARRIER DOMAIN-CONTAINING PROTEIN"/>
    <property type="match status" value="1"/>
</dbReference>
<dbReference type="Pfam" id="PF00550">
    <property type="entry name" value="PP-binding"/>
    <property type="match status" value="1"/>
</dbReference>
<dbReference type="SUPFAM" id="SSF47336">
    <property type="entry name" value="ACP-like"/>
    <property type="match status" value="1"/>
</dbReference>
<dbReference type="PROSITE" id="PS50075">
    <property type="entry name" value="CARRIER"/>
    <property type="match status" value="1"/>
</dbReference>
<dbReference type="PROSITE" id="PS00012">
    <property type="entry name" value="PHOSPHOPANTETHEINE"/>
    <property type="match status" value="1"/>
</dbReference>
<accession>Q6MLJ8</accession>
<gene>
    <name evidence="1" type="primary">acpP</name>
    <name type="ordered locus">Bd2011</name>
</gene>
<reference key="1">
    <citation type="journal article" date="2004" name="Science">
        <title>A predator unmasked: life cycle of Bdellovibrio bacteriovorus from a genomic perspective.</title>
        <authorList>
            <person name="Rendulic S."/>
            <person name="Jagtap P."/>
            <person name="Rosinus A."/>
            <person name="Eppinger M."/>
            <person name="Baar C."/>
            <person name="Lanz C."/>
            <person name="Keller H."/>
            <person name="Lambert C."/>
            <person name="Evans K.J."/>
            <person name="Goesmann A."/>
            <person name="Meyer F."/>
            <person name="Sockett R.E."/>
            <person name="Schuster S.C."/>
        </authorList>
    </citation>
    <scope>NUCLEOTIDE SEQUENCE [LARGE SCALE GENOMIC DNA]</scope>
    <source>
        <strain>ATCC 15356 / DSM 50701 / NCIMB 9529 / HD100</strain>
    </source>
</reference>